<name>CQ055_HUMAN</name>
<dbReference type="EMBL" id="AK096740">
    <property type="protein sequence ID" value="BAC04855.1"/>
    <property type="molecule type" value="mRNA"/>
</dbReference>
<dbReference type="EMBL" id="BC108932">
    <property type="protein sequence ID" value="AAI08933.1"/>
    <property type="molecule type" value="mRNA"/>
</dbReference>
<dbReference type="EMBL" id="BC108933">
    <property type="protein sequence ID" value="AAI08934.1"/>
    <property type="molecule type" value="mRNA"/>
</dbReference>
<dbReference type="IntAct" id="Q8N8I6">
    <property type="interactions" value="1"/>
</dbReference>
<dbReference type="iPTMnet" id="Q8N8I6"/>
<dbReference type="PhosphoSitePlus" id="Q8N8I6"/>
<dbReference type="BioMuta" id="HGNC:26816"/>
<dbReference type="DMDM" id="74729456"/>
<dbReference type="MassIVE" id="Q8N8I6"/>
<dbReference type="ProteomicsDB" id="72425"/>
<dbReference type="AGR" id="HGNC:26816"/>
<dbReference type="GeneCards" id="LINC00482"/>
<dbReference type="HGNC" id="HGNC:26816">
    <property type="gene designation" value="LINC00482"/>
</dbReference>
<dbReference type="neXtProt" id="NX_Q8N8I6"/>
<dbReference type="PharmGKB" id="PA142672238"/>
<dbReference type="InParanoid" id="Q8N8I6"/>
<dbReference type="PAN-GO" id="Q8N8I6">
    <property type="GO annotations" value="0 GO annotations based on evolutionary models"/>
</dbReference>
<dbReference type="PhylomeDB" id="Q8N8I6"/>
<dbReference type="PathwayCommons" id="Q8N8I6"/>
<dbReference type="SignaLink" id="Q8N8I6"/>
<dbReference type="Pharos" id="Q8N8I6">
    <property type="development level" value="Tdark"/>
</dbReference>
<dbReference type="PRO" id="PR:Q8N8I6"/>
<dbReference type="Proteomes" id="UP000005640">
    <property type="component" value="Unplaced"/>
</dbReference>
<dbReference type="RNAct" id="Q8N8I6">
    <property type="molecule type" value="protein"/>
</dbReference>
<proteinExistence type="uncertain"/>
<feature type="chain" id="PRO_0000286677" description="Putative uncharacterized protein encoded by LINC00482">
    <location>
        <begin position="1"/>
        <end position="264"/>
    </location>
</feature>
<feature type="region of interest" description="Disordered" evidence="1">
    <location>
        <begin position="1"/>
        <end position="52"/>
    </location>
</feature>
<feature type="region of interest" description="Disordered" evidence="1">
    <location>
        <begin position="123"/>
        <end position="207"/>
    </location>
</feature>
<feature type="compositionally biased region" description="Low complexity" evidence="1">
    <location>
        <begin position="29"/>
        <end position="40"/>
    </location>
</feature>
<feature type="compositionally biased region" description="Polar residues" evidence="1">
    <location>
        <begin position="144"/>
        <end position="154"/>
    </location>
</feature>
<feature type="compositionally biased region" description="Basic residues" evidence="1">
    <location>
        <begin position="188"/>
        <end position="197"/>
    </location>
</feature>
<feature type="sequence variant" id="VAR_032158" description="In dbSNP:rs2056439.">
    <original>V</original>
    <variation>L</variation>
    <location>
        <position position="50"/>
    </location>
</feature>
<feature type="sequence variant" id="VAR_032159" description="In dbSNP:rs2048058.">
    <original>R</original>
    <variation>C</variation>
    <location>
        <position position="119"/>
    </location>
</feature>
<comment type="interaction">
    <interactant intactId="EBI-10267998">
        <id>Q8N8I6</id>
    </interactant>
    <interactant intactId="EBI-740322">
        <id>Q93062</id>
        <label>RBPMS</label>
    </interactant>
    <organismsDiffer>false</organismsDiffer>
    <experiments>3</experiments>
</comment>
<comment type="caution">
    <text evidence="2">Product of a dubious CDS prediction. May be a non-coding RNA.</text>
</comment>
<keyword id="KW-1185">Reference proteome</keyword>
<gene>
    <name type="primary">LINC00482</name>
    <name type="synonym">C17orf55</name>
</gene>
<protein>
    <recommendedName>
        <fullName>Putative uncharacterized protein encoded by LINC00482</fullName>
    </recommendedName>
</protein>
<sequence>MPRSLKRAQLRSLLPRPPAVSHTQPWYRAAHPTTSPTAASRDVHPASGAVPGPWLVEGTAVREGPQLQDAVPQRPTRPSKALWPAQMSAAPAIRLGQMVPGDTRGLWGPQGTLLTWTYRGGQGGRWTRRAEGPREGTFAEQRPHFQSSGAQQESRLAMGPPPLGLGDAAGDGRGQTGQEKGRAEGRQARKSACKCPRKGPNPGPWTRAAAWWGRLEGAKASAKGEQVRDPGGHLWEQGHVSPCARFNQGHSCGSPKVSHTTWVS</sequence>
<evidence type="ECO:0000256" key="1">
    <source>
        <dbReference type="SAM" id="MobiDB-lite"/>
    </source>
</evidence>
<evidence type="ECO:0000305" key="2"/>
<reference key="1">
    <citation type="journal article" date="2004" name="Nat. Genet.">
        <title>Complete sequencing and characterization of 21,243 full-length human cDNAs.</title>
        <authorList>
            <person name="Ota T."/>
            <person name="Suzuki Y."/>
            <person name="Nishikawa T."/>
            <person name="Otsuki T."/>
            <person name="Sugiyama T."/>
            <person name="Irie R."/>
            <person name="Wakamatsu A."/>
            <person name="Hayashi K."/>
            <person name="Sato H."/>
            <person name="Nagai K."/>
            <person name="Kimura K."/>
            <person name="Makita H."/>
            <person name="Sekine M."/>
            <person name="Obayashi M."/>
            <person name="Nishi T."/>
            <person name="Shibahara T."/>
            <person name="Tanaka T."/>
            <person name="Ishii S."/>
            <person name="Yamamoto J."/>
            <person name="Saito K."/>
            <person name="Kawai Y."/>
            <person name="Isono Y."/>
            <person name="Nakamura Y."/>
            <person name="Nagahari K."/>
            <person name="Murakami K."/>
            <person name="Yasuda T."/>
            <person name="Iwayanagi T."/>
            <person name="Wagatsuma M."/>
            <person name="Shiratori A."/>
            <person name="Sudo H."/>
            <person name="Hosoiri T."/>
            <person name="Kaku Y."/>
            <person name="Kodaira H."/>
            <person name="Kondo H."/>
            <person name="Sugawara M."/>
            <person name="Takahashi M."/>
            <person name="Kanda K."/>
            <person name="Yokoi T."/>
            <person name="Furuya T."/>
            <person name="Kikkawa E."/>
            <person name="Omura Y."/>
            <person name="Abe K."/>
            <person name="Kamihara K."/>
            <person name="Katsuta N."/>
            <person name="Sato K."/>
            <person name="Tanikawa M."/>
            <person name="Yamazaki M."/>
            <person name="Ninomiya K."/>
            <person name="Ishibashi T."/>
            <person name="Yamashita H."/>
            <person name="Murakawa K."/>
            <person name="Fujimori K."/>
            <person name="Tanai H."/>
            <person name="Kimata M."/>
            <person name="Watanabe M."/>
            <person name="Hiraoka S."/>
            <person name="Chiba Y."/>
            <person name="Ishida S."/>
            <person name="Ono Y."/>
            <person name="Takiguchi S."/>
            <person name="Watanabe S."/>
            <person name="Yosida M."/>
            <person name="Hotuta T."/>
            <person name="Kusano J."/>
            <person name="Kanehori K."/>
            <person name="Takahashi-Fujii A."/>
            <person name="Hara H."/>
            <person name="Tanase T.-O."/>
            <person name="Nomura Y."/>
            <person name="Togiya S."/>
            <person name="Komai F."/>
            <person name="Hara R."/>
            <person name="Takeuchi K."/>
            <person name="Arita M."/>
            <person name="Imose N."/>
            <person name="Musashino K."/>
            <person name="Yuuki H."/>
            <person name="Oshima A."/>
            <person name="Sasaki N."/>
            <person name="Aotsuka S."/>
            <person name="Yoshikawa Y."/>
            <person name="Matsunawa H."/>
            <person name="Ichihara T."/>
            <person name="Shiohata N."/>
            <person name="Sano S."/>
            <person name="Moriya S."/>
            <person name="Momiyama H."/>
            <person name="Satoh N."/>
            <person name="Takami S."/>
            <person name="Terashima Y."/>
            <person name="Suzuki O."/>
            <person name="Nakagawa S."/>
            <person name="Senoh A."/>
            <person name="Mizoguchi H."/>
            <person name="Goto Y."/>
            <person name="Shimizu F."/>
            <person name="Wakebe H."/>
            <person name="Hishigaki H."/>
            <person name="Watanabe T."/>
            <person name="Sugiyama A."/>
            <person name="Takemoto M."/>
            <person name="Kawakami B."/>
            <person name="Yamazaki M."/>
            <person name="Watanabe K."/>
            <person name="Kumagai A."/>
            <person name="Itakura S."/>
            <person name="Fukuzumi Y."/>
            <person name="Fujimori Y."/>
            <person name="Komiyama M."/>
            <person name="Tashiro H."/>
            <person name="Tanigami A."/>
            <person name="Fujiwara T."/>
            <person name="Ono T."/>
            <person name="Yamada K."/>
            <person name="Fujii Y."/>
            <person name="Ozaki K."/>
            <person name="Hirao M."/>
            <person name="Ohmori Y."/>
            <person name="Kawabata A."/>
            <person name="Hikiji T."/>
            <person name="Kobatake N."/>
            <person name="Inagaki H."/>
            <person name="Ikema Y."/>
            <person name="Okamoto S."/>
            <person name="Okitani R."/>
            <person name="Kawakami T."/>
            <person name="Noguchi S."/>
            <person name="Itoh T."/>
            <person name="Shigeta K."/>
            <person name="Senba T."/>
            <person name="Matsumura K."/>
            <person name="Nakajima Y."/>
            <person name="Mizuno T."/>
            <person name="Morinaga M."/>
            <person name="Sasaki M."/>
            <person name="Togashi T."/>
            <person name="Oyama M."/>
            <person name="Hata H."/>
            <person name="Watanabe M."/>
            <person name="Komatsu T."/>
            <person name="Mizushima-Sugano J."/>
            <person name="Satoh T."/>
            <person name="Shirai Y."/>
            <person name="Takahashi Y."/>
            <person name="Nakagawa K."/>
            <person name="Okumura K."/>
            <person name="Nagase T."/>
            <person name="Nomura N."/>
            <person name="Kikuchi H."/>
            <person name="Masuho Y."/>
            <person name="Yamashita R."/>
            <person name="Nakai K."/>
            <person name="Yada T."/>
            <person name="Nakamura Y."/>
            <person name="Ohara O."/>
            <person name="Isogai T."/>
            <person name="Sugano S."/>
        </authorList>
    </citation>
    <scope>NUCLEOTIDE SEQUENCE [LARGE SCALE MRNA]</scope>
    <source>
        <tissue>Placenta</tissue>
    </source>
</reference>
<reference key="2">
    <citation type="journal article" date="2004" name="Genome Res.">
        <title>The status, quality, and expansion of the NIH full-length cDNA project: the Mammalian Gene Collection (MGC).</title>
        <authorList>
            <consortium name="The MGC Project Team"/>
        </authorList>
    </citation>
    <scope>NUCLEOTIDE SEQUENCE [LARGE SCALE MRNA]</scope>
</reference>
<accession>Q8N8I6</accession>
<organism>
    <name type="scientific">Homo sapiens</name>
    <name type="common">Human</name>
    <dbReference type="NCBI Taxonomy" id="9606"/>
    <lineage>
        <taxon>Eukaryota</taxon>
        <taxon>Metazoa</taxon>
        <taxon>Chordata</taxon>
        <taxon>Craniata</taxon>
        <taxon>Vertebrata</taxon>
        <taxon>Euteleostomi</taxon>
        <taxon>Mammalia</taxon>
        <taxon>Eutheria</taxon>
        <taxon>Euarchontoglires</taxon>
        <taxon>Primates</taxon>
        <taxon>Haplorrhini</taxon>
        <taxon>Catarrhini</taxon>
        <taxon>Hominidae</taxon>
        <taxon>Homo</taxon>
    </lineage>
</organism>